<evidence type="ECO:0000255" key="1">
    <source>
        <dbReference type="HAMAP-Rule" id="MF_00046"/>
    </source>
</evidence>
<organism>
    <name type="scientific">Wigglesworthia glossinidia brevipalpis</name>
    <dbReference type="NCBI Taxonomy" id="36870"/>
    <lineage>
        <taxon>Bacteria</taxon>
        <taxon>Pseudomonadati</taxon>
        <taxon>Pseudomonadota</taxon>
        <taxon>Gammaproteobacteria</taxon>
        <taxon>Enterobacterales</taxon>
        <taxon>Erwiniaceae</taxon>
        <taxon>Wigglesworthia</taxon>
    </lineage>
</organism>
<dbReference type="EC" id="6.3.2.8" evidence="1"/>
<dbReference type="EMBL" id="BA000021">
    <property type="protein sequence ID" value="BAC24351.1"/>
    <property type="molecule type" value="Genomic_DNA"/>
</dbReference>
<dbReference type="SMR" id="Q8D2Z7"/>
<dbReference type="STRING" id="36870.gene:10368693"/>
<dbReference type="KEGG" id="wbr:murC"/>
<dbReference type="eggNOG" id="COG0773">
    <property type="taxonomic scope" value="Bacteria"/>
</dbReference>
<dbReference type="HOGENOM" id="CLU_028104_2_2_6"/>
<dbReference type="OrthoDB" id="9804126at2"/>
<dbReference type="UniPathway" id="UPA00219"/>
<dbReference type="Proteomes" id="UP000000562">
    <property type="component" value="Chromosome"/>
</dbReference>
<dbReference type="GO" id="GO:0005737">
    <property type="term" value="C:cytoplasm"/>
    <property type="evidence" value="ECO:0007669"/>
    <property type="project" value="UniProtKB-SubCell"/>
</dbReference>
<dbReference type="GO" id="GO:0005524">
    <property type="term" value="F:ATP binding"/>
    <property type="evidence" value="ECO:0007669"/>
    <property type="project" value="UniProtKB-UniRule"/>
</dbReference>
<dbReference type="GO" id="GO:0008763">
    <property type="term" value="F:UDP-N-acetylmuramate-L-alanine ligase activity"/>
    <property type="evidence" value="ECO:0007669"/>
    <property type="project" value="UniProtKB-UniRule"/>
</dbReference>
<dbReference type="GO" id="GO:0051301">
    <property type="term" value="P:cell division"/>
    <property type="evidence" value="ECO:0007669"/>
    <property type="project" value="UniProtKB-KW"/>
</dbReference>
<dbReference type="GO" id="GO:0071555">
    <property type="term" value="P:cell wall organization"/>
    <property type="evidence" value="ECO:0007669"/>
    <property type="project" value="UniProtKB-KW"/>
</dbReference>
<dbReference type="GO" id="GO:0009252">
    <property type="term" value="P:peptidoglycan biosynthetic process"/>
    <property type="evidence" value="ECO:0007669"/>
    <property type="project" value="UniProtKB-UniRule"/>
</dbReference>
<dbReference type="GO" id="GO:0008360">
    <property type="term" value="P:regulation of cell shape"/>
    <property type="evidence" value="ECO:0007669"/>
    <property type="project" value="UniProtKB-KW"/>
</dbReference>
<dbReference type="Gene3D" id="3.90.190.20">
    <property type="entry name" value="Mur ligase, C-terminal domain"/>
    <property type="match status" value="1"/>
</dbReference>
<dbReference type="Gene3D" id="3.40.1190.10">
    <property type="entry name" value="Mur-like, catalytic domain"/>
    <property type="match status" value="1"/>
</dbReference>
<dbReference type="Gene3D" id="3.40.50.720">
    <property type="entry name" value="NAD(P)-binding Rossmann-like Domain"/>
    <property type="match status" value="1"/>
</dbReference>
<dbReference type="HAMAP" id="MF_00046">
    <property type="entry name" value="MurC"/>
    <property type="match status" value="1"/>
</dbReference>
<dbReference type="InterPro" id="IPR036565">
    <property type="entry name" value="Mur-like_cat_sf"/>
</dbReference>
<dbReference type="InterPro" id="IPR004101">
    <property type="entry name" value="Mur_ligase_C"/>
</dbReference>
<dbReference type="InterPro" id="IPR036615">
    <property type="entry name" value="Mur_ligase_C_dom_sf"/>
</dbReference>
<dbReference type="InterPro" id="IPR013221">
    <property type="entry name" value="Mur_ligase_cen"/>
</dbReference>
<dbReference type="InterPro" id="IPR000713">
    <property type="entry name" value="Mur_ligase_N"/>
</dbReference>
<dbReference type="InterPro" id="IPR050061">
    <property type="entry name" value="MurCDEF_pg_biosynth"/>
</dbReference>
<dbReference type="InterPro" id="IPR005758">
    <property type="entry name" value="UDP-N-AcMur_Ala_ligase_MurC"/>
</dbReference>
<dbReference type="NCBIfam" id="TIGR01082">
    <property type="entry name" value="murC"/>
    <property type="match status" value="1"/>
</dbReference>
<dbReference type="PANTHER" id="PTHR43445:SF3">
    <property type="entry name" value="UDP-N-ACETYLMURAMATE--L-ALANINE LIGASE"/>
    <property type="match status" value="1"/>
</dbReference>
<dbReference type="PANTHER" id="PTHR43445">
    <property type="entry name" value="UDP-N-ACETYLMURAMATE--L-ALANINE LIGASE-RELATED"/>
    <property type="match status" value="1"/>
</dbReference>
<dbReference type="Pfam" id="PF01225">
    <property type="entry name" value="Mur_ligase"/>
    <property type="match status" value="1"/>
</dbReference>
<dbReference type="Pfam" id="PF02875">
    <property type="entry name" value="Mur_ligase_C"/>
    <property type="match status" value="1"/>
</dbReference>
<dbReference type="Pfam" id="PF08245">
    <property type="entry name" value="Mur_ligase_M"/>
    <property type="match status" value="1"/>
</dbReference>
<dbReference type="SUPFAM" id="SSF51984">
    <property type="entry name" value="MurCD N-terminal domain"/>
    <property type="match status" value="1"/>
</dbReference>
<dbReference type="SUPFAM" id="SSF53623">
    <property type="entry name" value="MurD-like peptide ligases, catalytic domain"/>
    <property type="match status" value="1"/>
</dbReference>
<dbReference type="SUPFAM" id="SSF53244">
    <property type="entry name" value="MurD-like peptide ligases, peptide-binding domain"/>
    <property type="match status" value="1"/>
</dbReference>
<sequence>MNNLFFSKILRSDNIHFVGIGGVGMGALAEICIKLGYKISGSDIKENLITKKLSVLGAKIYNQHCANNIIESTIIVVSSAIKEDNLEIIYAKKLNIPVVKRAEFLSELMRFKYGIIVSGTHGKTTTTSIISYIYKEAKLFPTYLYGGRLNNSDDYGNLGNSKYWISEADESDNSFLFFRPIISVVTNIEKDHLESYQGNFKKLKESFIKFLHNIPFYGYSVLCLDDIEIKKIIPLINKKIVTYGFNRNSDFCITKFFQSNKKIIFIVYIKHQKRYLKFVSNLLGKHNALNITAAITIAIKEGIKYNIILNSIKKFPGINRRFDFINKYDLSNLNNKKGTITIVDDYGHHPTELKLTIKSVKKIWNKRRLIMIFQPHKYTRTKYLYNYFVKVLSTVDILLIMEIYSAGENPIYKINSKNLCQSIMALKRSHVIFIPNEKFLFKKLELLLKNNDILLLQGAGTIENIFKKLTSKLLL</sequence>
<comment type="function">
    <text evidence="1">Cell wall formation.</text>
</comment>
<comment type="catalytic activity">
    <reaction evidence="1">
        <text>UDP-N-acetyl-alpha-D-muramate + L-alanine + ATP = UDP-N-acetyl-alpha-D-muramoyl-L-alanine + ADP + phosphate + H(+)</text>
        <dbReference type="Rhea" id="RHEA:23372"/>
        <dbReference type="ChEBI" id="CHEBI:15378"/>
        <dbReference type="ChEBI" id="CHEBI:30616"/>
        <dbReference type="ChEBI" id="CHEBI:43474"/>
        <dbReference type="ChEBI" id="CHEBI:57972"/>
        <dbReference type="ChEBI" id="CHEBI:70757"/>
        <dbReference type="ChEBI" id="CHEBI:83898"/>
        <dbReference type="ChEBI" id="CHEBI:456216"/>
        <dbReference type="EC" id="6.3.2.8"/>
    </reaction>
</comment>
<comment type="pathway">
    <text evidence="1">Cell wall biogenesis; peptidoglycan biosynthesis.</text>
</comment>
<comment type="subcellular location">
    <subcellularLocation>
        <location evidence="1">Cytoplasm</location>
    </subcellularLocation>
</comment>
<comment type="similarity">
    <text evidence="1">Belongs to the MurCDEF family.</text>
</comment>
<reference key="1">
    <citation type="journal article" date="2002" name="Nat. Genet.">
        <title>Genome sequence of the endocellular obligate symbiont of tsetse flies, Wigglesworthia glossinidia.</title>
        <authorList>
            <person name="Akman L."/>
            <person name="Yamashita A."/>
            <person name="Watanabe H."/>
            <person name="Oshima K."/>
            <person name="Shiba T."/>
            <person name="Hattori M."/>
            <person name="Aksoy S."/>
        </authorList>
    </citation>
    <scope>NUCLEOTIDE SEQUENCE [LARGE SCALE GENOMIC DNA]</scope>
</reference>
<gene>
    <name evidence="1" type="primary">murC</name>
    <name type="ordered locus">WIGBR2050</name>
</gene>
<accession>Q8D2Z7</accession>
<feature type="chain" id="PRO_0000182184" description="UDP-N-acetylmuramate--L-alanine ligase">
    <location>
        <begin position="1"/>
        <end position="475"/>
    </location>
</feature>
<feature type="binding site" evidence="1">
    <location>
        <begin position="119"/>
        <end position="125"/>
    </location>
    <ligand>
        <name>ATP</name>
        <dbReference type="ChEBI" id="CHEBI:30616"/>
    </ligand>
</feature>
<name>MURC_WIGBR</name>
<keyword id="KW-0067">ATP-binding</keyword>
<keyword id="KW-0131">Cell cycle</keyword>
<keyword id="KW-0132">Cell division</keyword>
<keyword id="KW-0133">Cell shape</keyword>
<keyword id="KW-0961">Cell wall biogenesis/degradation</keyword>
<keyword id="KW-0963">Cytoplasm</keyword>
<keyword id="KW-0436">Ligase</keyword>
<keyword id="KW-0547">Nucleotide-binding</keyword>
<keyword id="KW-0573">Peptidoglycan synthesis</keyword>
<keyword id="KW-1185">Reference proteome</keyword>
<protein>
    <recommendedName>
        <fullName evidence="1">UDP-N-acetylmuramate--L-alanine ligase</fullName>
        <ecNumber evidence="1">6.3.2.8</ecNumber>
    </recommendedName>
    <alternativeName>
        <fullName evidence="1">UDP-N-acetylmuramoyl-L-alanine synthetase</fullName>
    </alternativeName>
</protein>
<proteinExistence type="inferred from homology"/>